<evidence type="ECO:0000255" key="1">
    <source>
        <dbReference type="HAMAP-Rule" id="MF_01337"/>
    </source>
</evidence>
<evidence type="ECO:0000305" key="2"/>
<gene>
    <name evidence="1" type="primary">rplR</name>
    <name evidence="1" type="synonym">rpl18</name>
</gene>
<reference key="1">
    <citation type="journal article" date="2000" name="J. Mol. Evol.">
        <title>Phylogenetic depth of the bacterial genera Aquifex and Thermotoga inferred from analysis of ribosomal protein, elongation factor, and RNA polymerase subunit sequences.</title>
        <authorList>
            <person name="Bocchetta M."/>
            <person name="Gribaldo S."/>
            <person name="Sanangelantoni A.M."/>
            <person name="Cammarano P."/>
        </authorList>
    </citation>
    <scope>NUCLEOTIDE SEQUENCE [GENOMIC DNA]</scope>
    <source>
        <strain>DSM 6858 / JCM 9492 / Kol5A</strain>
    </source>
</reference>
<dbReference type="EMBL" id="AF040101">
    <property type="protein sequence ID" value="AAD08799.1"/>
    <property type="molecule type" value="Genomic_DNA"/>
</dbReference>
<dbReference type="SMR" id="Q9ZI37"/>
<dbReference type="GO" id="GO:0022625">
    <property type="term" value="C:cytosolic large ribosomal subunit"/>
    <property type="evidence" value="ECO:0007669"/>
    <property type="project" value="TreeGrafter"/>
</dbReference>
<dbReference type="GO" id="GO:0008097">
    <property type="term" value="F:5S rRNA binding"/>
    <property type="evidence" value="ECO:0007669"/>
    <property type="project" value="TreeGrafter"/>
</dbReference>
<dbReference type="GO" id="GO:0003735">
    <property type="term" value="F:structural constituent of ribosome"/>
    <property type="evidence" value="ECO:0007669"/>
    <property type="project" value="InterPro"/>
</dbReference>
<dbReference type="GO" id="GO:0006412">
    <property type="term" value="P:translation"/>
    <property type="evidence" value="ECO:0007669"/>
    <property type="project" value="UniProtKB-UniRule"/>
</dbReference>
<dbReference type="CDD" id="cd00432">
    <property type="entry name" value="Ribosomal_L18_L5e"/>
    <property type="match status" value="1"/>
</dbReference>
<dbReference type="FunFam" id="3.30.420.100:FF:000001">
    <property type="entry name" value="50S ribosomal protein L18"/>
    <property type="match status" value="1"/>
</dbReference>
<dbReference type="Gene3D" id="3.30.420.100">
    <property type="match status" value="1"/>
</dbReference>
<dbReference type="HAMAP" id="MF_01337_B">
    <property type="entry name" value="Ribosomal_uL18_B"/>
    <property type="match status" value="1"/>
</dbReference>
<dbReference type="InterPro" id="IPR004389">
    <property type="entry name" value="Ribosomal_uL18_bac-type"/>
</dbReference>
<dbReference type="InterPro" id="IPR005484">
    <property type="entry name" value="Ribosomal_uL18_bac/euk"/>
</dbReference>
<dbReference type="NCBIfam" id="TIGR00060">
    <property type="entry name" value="L18_bact"/>
    <property type="match status" value="1"/>
</dbReference>
<dbReference type="PANTHER" id="PTHR12899">
    <property type="entry name" value="39S RIBOSOMAL PROTEIN L18, MITOCHONDRIAL"/>
    <property type="match status" value="1"/>
</dbReference>
<dbReference type="PANTHER" id="PTHR12899:SF3">
    <property type="entry name" value="LARGE RIBOSOMAL SUBUNIT PROTEIN UL18M"/>
    <property type="match status" value="1"/>
</dbReference>
<dbReference type="Pfam" id="PF00861">
    <property type="entry name" value="Ribosomal_L18p"/>
    <property type="match status" value="1"/>
</dbReference>
<dbReference type="SUPFAM" id="SSF53137">
    <property type="entry name" value="Translational machinery components"/>
    <property type="match status" value="1"/>
</dbReference>
<comment type="function">
    <text evidence="1">This is one of the proteins that bind and probably mediate the attachment of the 5S RNA into the large ribosomal subunit, where it forms part of the central protuberance.</text>
</comment>
<comment type="subunit">
    <text evidence="1">Part of the 50S ribosomal subunit; part of the 5S rRNA/L5/L18/L25 subcomplex. Contacts the 5S and 23S rRNAs.</text>
</comment>
<comment type="similarity">
    <text evidence="1">Belongs to the universal ribosomal protein uL18 family.</text>
</comment>
<protein>
    <recommendedName>
        <fullName evidence="1">Large ribosomal subunit protein uL18</fullName>
    </recommendedName>
    <alternativeName>
        <fullName evidence="2">50S ribosomal protein L18</fullName>
    </alternativeName>
</protein>
<keyword id="KW-0687">Ribonucleoprotein</keyword>
<keyword id="KW-0689">Ribosomal protein</keyword>
<keyword id="KW-0694">RNA-binding</keyword>
<keyword id="KW-0699">rRNA-binding</keyword>
<feature type="chain" id="PRO_0000131202" description="Large ribosomal subunit protein uL18">
    <location>
        <begin position="1"/>
        <end position="124"/>
    </location>
</feature>
<sequence length="124" mass="14413">MPRLKTRREKRLRRHKRIRKKVFGTPERPRLCVYRSLNHFYAQIIDDTIGHTLVSASTLDPEFEKITGKRGGKSIKDAEVVAEIIARRALEKGIKKVVFDRGGFKYHGKIKAFADKCREMGLEF</sequence>
<organism>
    <name type="scientific">Aquifex pyrophilus</name>
    <dbReference type="NCBI Taxonomy" id="2714"/>
    <lineage>
        <taxon>Bacteria</taxon>
        <taxon>Pseudomonadati</taxon>
        <taxon>Aquificota</taxon>
        <taxon>Aquificia</taxon>
        <taxon>Aquificales</taxon>
        <taxon>Aquificaceae</taxon>
        <taxon>Aquifex</taxon>
    </lineage>
</organism>
<accession>Q9ZI37</accession>
<name>RL18_AQUPY</name>
<proteinExistence type="inferred from homology"/>